<organism>
    <name type="scientific">Litoria rubella</name>
    <name type="common">Desert tree frog</name>
    <name type="synonym">Hyla rubella</name>
    <dbReference type="NCBI Taxonomy" id="104895"/>
    <lineage>
        <taxon>Eukaryota</taxon>
        <taxon>Metazoa</taxon>
        <taxon>Chordata</taxon>
        <taxon>Craniata</taxon>
        <taxon>Vertebrata</taxon>
        <taxon>Euteleostomi</taxon>
        <taxon>Amphibia</taxon>
        <taxon>Batrachia</taxon>
        <taxon>Anura</taxon>
        <taxon>Neobatrachia</taxon>
        <taxon>Hyloidea</taxon>
        <taxon>Hylidae</taxon>
        <taxon>Pelodryadinae</taxon>
        <taxon>Litoria</taxon>
    </lineage>
</organism>
<comment type="subcellular location">
    <subcellularLocation>
        <location>Secreted</location>
    </subcellularLocation>
</comment>
<comment type="tissue specificity">
    <text>Expressed by the skin glands.</text>
</comment>
<proteinExistence type="evidence at protein level"/>
<name>EI05_LITRU</name>
<sequence>IYEPEIA</sequence>
<reference key="1">
    <citation type="journal article" date="1999" name="Aust. J. Chem.">
        <title>Peptides from the skin glands of the Australian buzzing tree frog Litori electrica. Comparison with the skin peptides from Litoria rubella.</title>
        <authorList>
            <person name="Wabnitz P.A."/>
            <person name="Bowie J.H."/>
            <person name="Tyler M.J."/>
            <person name="Wallace J.C."/>
        </authorList>
    </citation>
    <scope>PROTEIN SEQUENCE</scope>
    <scope>AMIDATION AT ALA-7</scope>
    <source>
        <tissue>Skin secretion</tissue>
    </source>
</reference>
<keyword id="KW-0027">Amidation</keyword>
<keyword id="KW-0878">Amphibian defense peptide</keyword>
<keyword id="KW-0903">Direct protein sequencing</keyword>
<keyword id="KW-0964">Secreted</keyword>
<protein>
    <recommendedName>
        <fullName>Electrin-5</fullName>
    </recommendedName>
</protein>
<accession>P82101</accession>
<dbReference type="GO" id="GO:0005576">
    <property type="term" value="C:extracellular region"/>
    <property type="evidence" value="ECO:0007669"/>
    <property type="project" value="UniProtKB-SubCell"/>
</dbReference>
<dbReference type="GO" id="GO:0006952">
    <property type="term" value="P:defense response"/>
    <property type="evidence" value="ECO:0007669"/>
    <property type="project" value="UniProtKB-KW"/>
</dbReference>
<feature type="peptide" id="PRO_0000043796" description="Electrin-5">
    <location>
        <begin position="1"/>
        <end position="7"/>
    </location>
</feature>
<feature type="modified residue" description="Alanine amide" evidence="1">
    <location>
        <position position="7"/>
    </location>
</feature>
<evidence type="ECO:0000269" key="1">
    <source ref="1"/>
</evidence>